<gene>
    <name evidence="5" type="ordered locus">CDR20291_0807</name>
</gene>
<accession>P0DX44</accession>
<accession>A0A9R0CDR7</accession>
<sequence length="295" mass="31506">MSGIISVMTQSLILSIMALGVYITYKILDFPDMSADGSYTMGASIVAFSLTNGISPVVATLMAILCGCTAGLVTGILHIKFKISNLLSGILVMGMLYSINLRIMGKSNIPLFSFKHLFNGEISPIVLALAFVFICKILLDLFLKTGLGYTLKGVGDNSQMIKSLGINIGSIKILGLMISNGLIALSGSLMAQFLGFSDVNMGIGTLVLGIASIIIGITLFKKFTFIKDTTAIIVGSFIYQFTIYFAMSLGMLSTDLKLITAIVIIAFLATGNLNISLKKTNAKLVPKINQKKEVL</sequence>
<keyword id="KW-0029">Amino-acid transport</keyword>
<keyword id="KW-1003">Cell membrane</keyword>
<keyword id="KW-0472">Membrane</keyword>
<keyword id="KW-0812">Transmembrane</keyword>
<keyword id="KW-1133">Transmembrane helix</keyword>
<keyword id="KW-0813">Transport</keyword>
<dbReference type="EMBL" id="FN545816">
    <property type="protein sequence ID" value="CBE02870.1"/>
    <property type="molecule type" value="Genomic_DNA"/>
</dbReference>
<dbReference type="RefSeq" id="WP_009888701.1">
    <property type="nucleotide sequence ID" value="NZ_CP115183.1"/>
</dbReference>
<dbReference type="KEGG" id="cdl:CDR20291_0807"/>
<dbReference type="Proteomes" id="UP000002070">
    <property type="component" value="Chromosome"/>
</dbReference>
<dbReference type="GO" id="GO:0005886">
    <property type="term" value="C:plasma membrane"/>
    <property type="evidence" value="ECO:0007669"/>
    <property type="project" value="UniProtKB-SubCell"/>
</dbReference>
<dbReference type="GO" id="GO:0022857">
    <property type="term" value="F:transmembrane transporter activity"/>
    <property type="evidence" value="ECO:0007669"/>
    <property type="project" value="InterPro"/>
</dbReference>
<dbReference type="GO" id="GO:0006865">
    <property type="term" value="P:amino acid transport"/>
    <property type="evidence" value="ECO:0007669"/>
    <property type="project" value="UniProtKB-KW"/>
</dbReference>
<dbReference type="CDD" id="cd06574">
    <property type="entry name" value="TM_PBP1_branched-chain-AA_like"/>
    <property type="match status" value="1"/>
</dbReference>
<dbReference type="InterPro" id="IPR001851">
    <property type="entry name" value="ABC_transp_permease"/>
</dbReference>
<dbReference type="PANTHER" id="PTHR32196">
    <property type="entry name" value="ABC TRANSPORTER PERMEASE PROTEIN YPHD-RELATED-RELATED"/>
    <property type="match status" value="1"/>
</dbReference>
<dbReference type="PANTHER" id="PTHR32196:SF69">
    <property type="entry name" value="BRANCHED-CHAIN AMINO ACID TRANSPORT SYSTEM, PERMEASE PROTEIN"/>
    <property type="match status" value="1"/>
</dbReference>
<dbReference type="Pfam" id="PF02653">
    <property type="entry name" value="BPD_transp_2"/>
    <property type="match status" value="1"/>
</dbReference>
<organism>
    <name type="scientific">Clostridioides difficile (strain R20291)</name>
    <name type="common">Peptoclostridium difficile</name>
    <dbReference type="NCBI Taxonomy" id="645463"/>
    <lineage>
        <taxon>Bacteria</taxon>
        <taxon>Bacillati</taxon>
        <taxon>Bacillota</taxon>
        <taxon>Clostridia</taxon>
        <taxon>Peptostreptococcales</taxon>
        <taxon>Peptostreptococcaceae</taxon>
        <taxon>Clostridioides</taxon>
    </lineage>
</organism>
<reference key="1">
    <citation type="journal article" date="2009" name="Genome Biol.">
        <title>Comparative genome and phenotypic analysis of Clostridium difficile 027 strains provides insight into the evolution of a hypervirulent bacterium.</title>
        <authorList>
            <person name="Stabler R.A."/>
            <person name="He M."/>
            <person name="Dawson L."/>
            <person name="Martin M."/>
            <person name="Valiente E."/>
            <person name="Corton C."/>
            <person name="Lawley T.D."/>
            <person name="Sebaihia M."/>
            <person name="Quail M.A."/>
            <person name="Rose G."/>
            <person name="Gerding D.N."/>
            <person name="Gibert M."/>
            <person name="Popoff M.R."/>
            <person name="Parkhill J."/>
            <person name="Dougan G."/>
            <person name="Wren B.W."/>
        </authorList>
    </citation>
    <scope>NUCLEOTIDE SEQUENCE [LARGE SCALE GENOMIC DNA]</scope>
    <source>
        <strain>R20291</strain>
    </source>
</reference>
<reference key="2">
    <citation type="journal article" date="2018" name="Front. Microbiol.">
        <title>Convergent loss of ABC transporter genes from Clostridioides difficile genomes is associated with impaired tyrosine uptake and p-cresol production.</title>
        <authorList>
            <person name="Steglich M."/>
            <person name="Hofmann J.D."/>
            <person name="Helmecke J."/>
            <person name="Sikorski J."/>
            <person name="Sproeer C."/>
            <person name="Riedel T."/>
            <person name="Bunk B."/>
            <person name="Overmann J."/>
            <person name="Neumann-Schaal M."/>
            <person name="Nuebel U."/>
        </authorList>
    </citation>
    <scope>FUNCTION</scope>
</reference>
<feature type="chain" id="PRO_0000458886" description="Tyrosine transport system permease protein">
    <location>
        <begin position="1"/>
        <end position="295"/>
    </location>
</feature>
<feature type="transmembrane region" description="Helical" evidence="1">
    <location>
        <begin position="3"/>
        <end position="23"/>
    </location>
</feature>
<feature type="transmembrane region" description="Helical" evidence="1">
    <location>
        <begin position="57"/>
        <end position="77"/>
    </location>
</feature>
<feature type="transmembrane region" description="Helical" evidence="1">
    <location>
        <begin position="81"/>
        <end position="101"/>
    </location>
</feature>
<feature type="transmembrane region" description="Helical" evidence="1">
    <location>
        <begin position="122"/>
        <end position="142"/>
    </location>
</feature>
<feature type="transmembrane region" description="Helical" evidence="1">
    <location>
        <begin position="173"/>
        <end position="193"/>
    </location>
</feature>
<feature type="transmembrane region" description="Helical" evidence="1">
    <location>
        <begin position="200"/>
        <end position="220"/>
    </location>
</feature>
<feature type="transmembrane region" description="Helical" evidence="1">
    <location>
        <begin position="232"/>
        <end position="252"/>
    </location>
</feature>
<feature type="transmembrane region" description="Helical" evidence="1">
    <location>
        <begin position="256"/>
        <end position="276"/>
    </location>
</feature>
<proteinExistence type="inferred from homology"/>
<evidence type="ECO:0000255" key="1"/>
<evidence type="ECO:0000269" key="2">
    <source>
    </source>
</evidence>
<evidence type="ECO:0000305" key="3"/>
<evidence type="ECO:0000305" key="4">
    <source>
    </source>
</evidence>
<evidence type="ECO:0000312" key="5">
    <source>
        <dbReference type="EMBL" id="CBE02870.1"/>
    </source>
</evidence>
<comment type="function">
    <text evidence="2 3">Probably part of an ABC transporter complex involved in tyrosine uptake (PubMed:29867812). May also import phenylalanine (PubMed:29867812). Probably responsible for the translocation of the substrate across the membrane (Probable).</text>
</comment>
<comment type="subunit">
    <text evidence="4">The complex is probably composed of two ATP-binding proteins (CDR20291_0806), two transmembrane proteins (CDR20291_0807) and a solute-binding protein (CDR20291_0805).</text>
</comment>
<comment type="subcellular location">
    <subcellularLocation>
        <location evidence="3">Cell membrane</location>
        <topology evidence="1">Multi-pass membrane protein</topology>
    </subcellularLocation>
</comment>
<comment type="similarity">
    <text evidence="3">Belongs to the binding-protein-dependent transport system permease family.</text>
</comment>
<name>TYRPM_CLODR</name>
<protein>
    <recommendedName>
        <fullName evidence="3">Tyrosine transport system permease protein</fullName>
    </recommendedName>
</protein>